<feature type="propeptide" id="PRO_0000013393" evidence="2">
    <location>
        <begin position="1" status="less than"/>
        <end position="34"/>
    </location>
</feature>
<feature type="peptide" id="PRO_0000013394" description="Hepcidin">
    <location>
        <begin position="37"/>
        <end position="61"/>
    </location>
</feature>
<feature type="region of interest" description="Disordered" evidence="3">
    <location>
        <begin position="1"/>
        <end position="24"/>
    </location>
</feature>
<feature type="disulfide bond" evidence="1">
    <location>
        <begin position="43"/>
        <end position="59"/>
    </location>
</feature>
<feature type="disulfide bond" evidence="1">
    <location>
        <begin position="46"/>
        <end position="49"/>
    </location>
</feature>
<feature type="disulfide bond" evidence="1">
    <location>
        <begin position="47"/>
        <end position="55"/>
    </location>
</feature>
<feature type="disulfide bond" evidence="1">
    <location>
        <begin position="50"/>
        <end position="58"/>
    </location>
</feature>
<feature type="non-terminal residue">
    <location>
        <position position="1"/>
    </location>
</feature>
<organism>
    <name type="scientific">Oncorhynchus mykiss</name>
    <name type="common">Rainbow trout</name>
    <name type="synonym">Salmo gairdneri</name>
    <dbReference type="NCBI Taxonomy" id="8022"/>
    <lineage>
        <taxon>Eukaryota</taxon>
        <taxon>Metazoa</taxon>
        <taxon>Chordata</taxon>
        <taxon>Craniata</taxon>
        <taxon>Vertebrata</taxon>
        <taxon>Euteleostomi</taxon>
        <taxon>Actinopterygii</taxon>
        <taxon>Neopterygii</taxon>
        <taxon>Teleostei</taxon>
        <taxon>Protacanthopterygii</taxon>
        <taxon>Salmoniformes</taxon>
        <taxon>Salmonidae</taxon>
        <taxon>Salmoninae</taxon>
        <taxon>Oncorhynchus</taxon>
    </lineage>
</organism>
<name>HEPC_ONCMY</name>
<sequence length="61" mass="6946">LQVLTEEVGSIDSPVGEHQQPGGESMRLPEHFRFKRXSHLSLCRWCCNCCHNKGXGFCCKF</sequence>
<dbReference type="EMBL" id="AF281354">
    <property type="protein sequence ID" value="AAG30029.1"/>
    <property type="molecule type" value="mRNA"/>
</dbReference>
<dbReference type="Proteomes" id="UP000694395">
    <property type="component" value="Unplaced"/>
</dbReference>
<dbReference type="GO" id="GO:0005576">
    <property type="term" value="C:extracellular region"/>
    <property type="evidence" value="ECO:0007669"/>
    <property type="project" value="UniProtKB-SubCell"/>
</dbReference>
<dbReference type="GO" id="GO:0005179">
    <property type="term" value="F:hormone activity"/>
    <property type="evidence" value="ECO:0007669"/>
    <property type="project" value="UniProtKB-KW"/>
</dbReference>
<dbReference type="GO" id="GO:0042742">
    <property type="term" value="P:defense response to bacterium"/>
    <property type="evidence" value="ECO:0007669"/>
    <property type="project" value="UniProtKB-KW"/>
</dbReference>
<dbReference type="GO" id="GO:0006879">
    <property type="term" value="P:intracellular iron ion homeostasis"/>
    <property type="evidence" value="ECO:0007669"/>
    <property type="project" value="InterPro"/>
</dbReference>
<dbReference type="GO" id="GO:0008285">
    <property type="term" value="P:negative regulation of cell population proliferation"/>
    <property type="evidence" value="ECO:0000314"/>
    <property type="project" value="AgBase"/>
</dbReference>
<dbReference type="InterPro" id="IPR010500">
    <property type="entry name" value="Hepcidin"/>
</dbReference>
<dbReference type="Pfam" id="PF06446">
    <property type="entry name" value="Hepcidin"/>
    <property type="match status" value="1"/>
</dbReference>
<evidence type="ECO:0000250" key="1"/>
<evidence type="ECO:0000255" key="2"/>
<evidence type="ECO:0000256" key="3">
    <source>
        <dbReference type="SAM" id="MobiDB-lite"/>
    </source>
</evidence>
<evidence type="ECO:0000305" key="4"/>
<reference key="1">
    <citation type="journal article" date="2001" name="Dev. Comp. Immunol.">
        <title>Immune-relevant (including acute phase) genes identified in the livers of rainbow trout, Oncorhynchus mykiss, by means of suppression subtractive hybridization.</title>
        <authorList>
            <person name="Bayne C.J."/>
            <person name="Gerwick L."/>
            <person name="Fujiki K."/>
            <person name="Nakao M."/>
            <person name="Yano T."/>
        </authorList>
    </citation>
    <scope>NUCLEOTIDE SEQUENCE [MRNA]</scope>
</reference>
<accession>Q9DFD6</accession>
<proteinExistence type="evidence at transcript level"/>
<gene>
    <name type="primary">hamp</name>
</gene>
<comment type="function">
    <text evidence="1">Seems to act as a signaling molecule involved in the maintenance of iron homeostasis. Seems to be required in conjunction with HFE to regulate both intestinal iron absorption and iron storage in macrophages. May also have antimicrobial activity (By similarity).</text>
</comment>
<comment type="subcellular location">
    <subcellularLocation>
        <location>Secreted</location>
    </subcellularLocation>
</comment>
<comment type="similarity">
    <text evidence="4">Belongs to the hepcidin family.</text>
</comment>
<protein>
    <recommendedName>
        <fullName>Hepcidin</fullName>
    </recommendedName>
</protein>
<keyword id="KW-0044">Antibiotic</keyword>
<keyword id="KW-0929">Antimicrobial</keyword>
<keyword id="KW-0165">Cleavage on pair of basic residues</keyword>
<keyword id="KW-1015">Disulfide bond</keyword>
<keyword id="KW-0372">Hormone</keyword>
<keyword id="KW-0964">Secreted</keyword>